<gene>
    <name evidence="1" type="primary">cmoA</name>
    <name type="ordered locus">ECDH10B_2011</name>
</gene>
<protein>
    <recommendedName>
        <fullName evidence="1">Carboxy-S-adenosyl-L-methionine synthase</fullName>
        <shortName evidence="1">Cx-SAM synthase</shortName>
        <ecNumber evidence="1">2.1.3.-</ecNumber>
    </recommendedName>
</protein>
<organism>
    <name type="scientific">Escherichia coli (strain K12 / DH10B)</name>
    <dbReference type="NCBI Taxonomy" id="316385"/>
    <lineage>
        <taxon>Bacteria</taxon>
        <taxon>Pseudomonadati</taxon>
        <taxon>Pseudomonadota</taxon>
        <taxon>Gammaproteobacteria</taxon>
        <taxon>Enterobacterales</taxon>
        <taxon>Enterobacteriaceae</taxon>
        <taxon>Escherichia</taxon>
    </lineage>
</organism>
<proteinExistence type="inferred from homology"/>
<accession>B1XHD8</accession>
<feature type="chain" id="PRO_1000201346" description="Carboxy-S-adenosyl-L-methionine synthase">
    <location>
        <begin position="1"/>
        <end position="247"/>
    </location>
</feature>
<feature type="binding site" evidence="1">
    <location>
        <position position="39"/>
    </location>
    <ligand>
        <name>S-adenosyl-L-methionine</name>
        <dbReference type="ChEBI" id="CHEBI:59789"/>
    </ligand>
</feature>
<feature type="binding site" evidence="1">
    <location>
        <begin position="64"/>
        <end position="66"/>
    </location>
    <ligand>
        <name>S-adenosyl-L-methionine</name>
        <dbReference type="ChEBI" id="CHEBI:59789"/>
    </ligand>
</feature>
<feature type="binding site" evidence="1">
    <location>
        <begin position="89"/>
        <end position="90"/>
    </location>
    <ligand>
        <name>S-adenosyl-L-methionine</name>
        <dbReference type="ChEBI" id="CHEBI:59789"/>
    </ligand>
</feature>
<feature type="binding site" evidence="1">
    <location>
        <begin position="117"/>
        <end position="118"/>
    </location>
    <ligand>
        <name>S-adenosyl-L-methionine</name>
        <dbReference type="ChEBI" id="CHEBI:59789"/>
    </ligand>
</feature>
<feature type="binding site" evidence="1">
    <location>
        <position position="132"/>
    </location>
    <ligand>
        <name>S-adenosyl-L-methionine</name>
        <dbReference type="ChEBI" id="CHEBI:59789"/>
    </ligand>
</feature>
<feature type="binding site" evidence="1">
    <location>
        <position position="199"/>
    </location>
    <ligand>
        <name>S-adenosyl-L-methionine</name>
        <dbReference type="ChEBI" id="CHEBI:59789"/>
    </ligand>
</feature>
<name>CMOA_ECODH</name>
<dbReference type="EC" id="2.1.3.-" evidence="1"/>
<dbReference type="EMBL" id="CP000948">
    <property type="protein sequence ID" value="ACB03068.1"/>
    <property type="molecule type" value="Genomic_DNA"/>
</dbReference>
<dbReference type="RefSeq" id="WP_000019590.1">
    <property type="nucleotide sequence ID" value="NC_010473.1"/>
</dbReference>
<dbReference type="SMR" id="B1XHD8"/>
<dbReference type="KEGG" id="ecd:ECDH10B_2011"/>
<dbReference type="HOGENOM" id="CLU_078475_0_0_6"/>
<dbReference type="GO" id="GO:0016743">
    <property type="term" value="F:carboxyl- or carbamoyltransferase activity"/>
    <property type="evidence" value="ECO:0007669"/>
    <property type="project" value="UniProtKB-UniRule"/>
</dbReference>
<dbReference type="GO" id="GO:1904047">
    <property type="term" value="F:S-adenosyl-L-methionine binding"/>
    <property type="evidence" value="ECO:0007669"/>
    <property type="project" value="UniProtKB-UniRule"/>
</dbReference>
<dbReference type="GO" id="GO:0002098">
    <property type="term" value="P:tRNA wobble uridine modification"/>
    <property type="evidence" value="ECO:0007669"/>
    <property type="project" value="InterPro"/>
</dbReference>
<dbReference type="CDD" id="cd02440">
    <property type="entry name" value="AdoMet_MTases"/>
    <property type="match status" value="1"/>
</dbReference>
<dbReference type="FunFam" id="3.40.50.150:FF:000030">
    <property type="entry name" value="Carboxy-S-adenosyl-L-methionine synthase"/>
    <property type="match status" value="1"/>
</dbReference>
<dbReference type="Gene3D" id="3.40.50.150">
    <property type="entry name" value="Vaccinia Virus protein VP39"/>
    <property type="match status" value="1"/>
</dbReference>
<dbReference type="HAMAP" id="MF_01589">
    <property type="entry name" value="Cx_SAM_synthase"/>
    <property type="match status" value="1"/>
</dbReference>
<dbReference type="InterPro" id="IPR005271">
    <property type="entry name" value="CmoA"/>
</dbReference>
<dbReference type="InterPro" id="IPR041698">
    <property type="entry name" value="Methyltransf_25"/>
</dbReference>
<dbReference type="InterPro" id="IPR029063">
    <property type="entry name" value="SAM-dependent_MTases_sf"/>
</dbReference>
<dbReference type="NCBIfam" id="TIGR00740">
    <property type="entry name" value="carboxy-S-adenosyl-L-methionine synthase CmoA"/>
    <property type="match status" value="1"/>
</dbReference>
<dbReference type="NCBIfam" id="NF011995">
    <property type="entry name" value="PRK15451.1"/>
    <property type="match status" value="1"/>
</dbReference>
<dbReference type="PANTHER" id="PTHR43861:SF2">
    <property type="entry name" value="CARBOXY-S-ADENOSYL-L-METHIONINE SYNTHASE"/>
    <property type="match status" value="1"/>
</dbReference>
<dbReference type="PANTHER" id="PTHR43861">
    <property type="entry name" value="TRANS-ACONITATE 2-METHYLTRANSFERASE-RELATED"/>
    <property type="match status" value="1"/>
</dbReference>
<dbReference type="Pfam" id="PF13649">
    <property type="entry name" value="Methyltransf_25"/>
    <property type="match status" value="1"/>
</dbReference>
<dbReference type="PIRSF" id="PIRSF006325">
    <property type="entry name" value="MeTrfase_bac"/>
    <property type="match status" value="1"/>
</dbReference>
<dbReference type="SUPFAM" id="SSF53335">
    <property type="entry name" value="S-adenosyl-L-methionine-dependent methyltransferases"/>
    <property type="match status" value="1"/>
</dbReference>
<reference key="1">
    <citation type="journal article" date="2008" name="J. Bacteriol.">
        <title>The complete genome sequence of Escherichia coli DH10B: insights into the biology of a laboratory workhorse.</title>
        <authorList>
            <person name="Durfee T."/>
            <person name="Nelson R."/>
            <person name="Baldwin S."/>
            <person name="Plunkett G. III"/>
            <person name="Burland V."/>
            <person name="Mau B."/>
            <person name="Petrosino J.F."/>
            <person name="Qin X."/>
            <person name="Muzny D.M."/>
            <person name="Ayele M."/>
            <person name="Gibbs R.A."/>
            <person name="Csorgo B."/>
            <person name="Posfai G."/>
            <person name="Weinstock G.M."/>
            <person name="Blattner F.R."/>
        </authorList>
    </citation>
    <scope>NUCLEOTIDE SEQUENCE [LARGE SCALE GENOMIC DNA]</scope>
    <source>
        <strain>K12 / DH10B</strain>
    </source>
</reference>
<keyword id="KW-0949">S-adenosyl-L-methionine</keyword>
<keyword id="KW-0808">Transferase</keyword>
<sequence length="247" mass="27777">MSHRDTLFSAPIARLGDWTFDERVAEVFPDMIQRSVPGYSNIISMIGMLAERFVQPGTQVYDLGCSLGAATLSVRRNIHHDNCKIIAIDNSPAMIERCRRHIDAYKAPTPVDVIEGDIRDIAIENASMVVLNFTLQFLEPSERQALLDKIYQGLNPGGALVLSEKFSFEDAKVGELLFNMHHDFKRANGYSELEISQKRSMLENVMLTDSVETHKARLHNAGFEHSELWFQCFNFGSLVALKAEDAA</sequence>
<evidence type="ECO:0000255" key="1">
    <source>
        <dbReference type="HAMAP-Rule" id="MF_01589"/>
    </source>
</evidence>
<comment type="function">
    <text evidence="1">Catalyzes the conversion of S-adenosyl-L-methionine (SAM) to carboxy-S-adenosyl-L-methionine (Cx-SAM).</text>
</comment>
<comment type="catalytic activity">
    <reaction evidence="1">
        <text>prephenate + S-adenosyl-L-methionine = carboxy-S-adenosyl-L-methionine + 3-phenylpyruvate + H2O</text>
        <dbReference type="Rhea" id="RHEA:51692"/>
        <dbReference type="ChEBI" id="CHEBI:15377"/>
        <dbReference type="ChEBI" id="CHEBI:18005"/>
        <dbReference type="ChEBI" id="CHEBI:29934"/>
        <dbReference type="ChEBI" id="CHEBI:59789"/>
        <dbReference type="ChEBI" id="CHEBI:134278"/>
    </reaction>
</comment>
<comment type="subunit">
    <text evidence="1">Homodimer.</text>
</comment>
<comment type="similarity">
    <text evidence="1">Belongs to the class I-like SAM-binding methyltransferase superfamily. Cx-SAM synthase family.</text>
</comment>